<sequence>MNLKLVFESGDPVLIGVFVLMLLMSIVTWCLVVLRCIKLYRARKGNAAVKRHMRDTLSLNDAVEKVRAVDAPLSKLAQEALQSYRNYRRNEASELAQALPLNEYLVIQIRNSMAQIMRRFDYGMTALASIGATAPFIGLFGTVWGIYHALINIGQSGQMSIAAVAGPIGEALVATAAGLFVAIPAVLAYNFLNRGTKILTQDLDAMAHDLHVRLLNQKDS</sequence>
<proteinExistence type="inferred from homology"/>
<dbReference type="EMBL" id="AL157959">
    <property type="protein sequence ID" value="CAM09093.1"/>
    <property type="molecule type" value="Genomic_DNA"/>
</dbReference>
<dbReference type="RefSeq" id="WP_002216612.1">
    <property type="nucleotide sequence ID" value="NC_003116.1"/>
</dbReference>
<dbReference type="SMR" id="P64099"/>
<dbReference type="EnsemblBacteria" id="CAM09093">
    <property type="protein sequence ID" value="CAM09093"/>
    <property type="gene ID" value="NMA1984"/>
</dbReference>
<dbReference type="GeneID" id="93387596"/>
<dbReference type="KEGG" id="nma:NMA1984"/>
<dbReference type="HOGENOM" id="CLU_053325_2_0_4"/>
<dbReference type="Proteomes" id="UP000000626">
    <property type="component" value="Chromosome"/>
</dbReference>
<dbReference type="GO" id="GO:0005886">
    <property type="term" value="C:plasma membrane"/>
    <property type="evidence" value="ECO:0007669"/>
    <property type="project" value="UniProtKB-SubCell"/>
</dbReference>
<dbReference type="GO" id="GO:0017038">
    <property type="term" value="P:protein import"/>
    <property type="evidence" value="ECO:0007669"/>
    <property type="project" value="TreeGrafter"/>
</dbReference>
<dbReference type="InterPro" id="IPR050790">
    <property type="entry name" value="ExbB/TolQ_transport"/>
</dbReference>
<dbReference type="InterPro" id="IPR002898">
    <property type="entry name" value="MotA_ExbB_proton_chnl"/>
</dbReference>
<dbReference type="PANTHER" id="PTHR30625:SF14">
    <property type="entry name" value="BIOPOLYMER TRANSPORT PROTEIN EXBB"/>
    <property type="match status" value="1"/>
</dbReference>
<dbReference type="PANTHER" id="PTHR30625">
    <property type="entry name" value="PROTEIN TOLQ"/>
    <property type="match status" value="1"/>
</dbReference>
<dbReference type="Pfam" id="PF01618">
    <property type="entry name" value="MotA_ExbB"/>
    <property type="match status" value="1"/>
</dbReference>
<reference key="1">
    <citation type="journal article" date="2000" name="Nature">
        <title>Complete DNA sequence of a serogroup A strain of Neisseria meningitidis Z2491.</title>
        <authorList>
            <person name="Parkhill J."/>
            <person name="Achtman M."/>
            <person name="James K.D."/>
            <person name="Bentley S.D."/>
            <person name="Churcher C.M."/>
            <person name="Klee S.R."/>
            <person name="Morelli G."/>
            <person name="Basham D."/>
            <person name="Brown D."/>
            <person name="Chillingworth T."/>
            <person name="Davies R.M."/>
            <person name="Davis P."/>
            <person name="Devlin K."/>
            <person name="Feltwell T."/>
            <person name="Hamlin N."/>
            <person name="Holroyd S."/>
            <person name="Jagels K."/>
            <person name="Leather S."/>
            <person name="Moule S."/>
            <person name="Mungall K.L."/>
            <person name="Quail M.A."/>
            <person name="Rajandream M.A."/>
            <person name="Rutherford K.M."/>
            <person name="Simmonds M."/>
            <person name="Skelton J."/>
            <person name="Whitehead S."/>
            <person name="Spratt B.G."/>
            <person name="Barrell B.G."/>
        </authorList>
    </citation>
    <scope>NUCLEOTIDE SEQUENCE [LARGE SCALE GENOMIC DNA]</scope>
    <source>
        <strain>DSM 15465 / Z2491</strain>
    </source>
</reference>
<accession>P64099</accession>
<accession>A1ITH8</accession>
<accession>P57027</accession>
<gene>
    <name type="primary">exbB</name>
    <name type="ordered locus">NMA1984</name>
</gene>
<evidence type="ECO:0000250" key="1"/>
<evidence type="ECO:0000255" key="2"/>
<evidence type="ECO:0000305" key="3"/>
<organism>
    <name type="scientific">Neisseria meningitidis serogroup A / serotype 4A (strain DSM 15465 / Z2491)</name>
    <dbReference type="NCBI Taxonomy" id="122587"/>
    <lineage>
        <taxon>Bacteria</taxon>
        <taxon>Pseudomonadati</taxon>
        <taxon>Pseudomonadota</taxon>
        <taxon>Betaproteobacteria</taxon>
        <taxon>Neisseriales</taxon>
        <taxon>Neisseriaceae</taxon>
        <taxon>Neisseria</taxon>
    </lineage>
</organism>
<protein>
    <recommendedName>
        <fullName>Biopolymer transport protein ExbB</fullName>
    </recommendedName>
</protein>
<comment type="function">
    <text evidence="1">Involved in the TonB-dependent energy-dependent transport of various receptor-bound substrates. Protects ExbD from proteolytic degradation and functionally stabilizes TonB (By similarity).</text>
</comment>
<comment type="subunit">
    <text evidence="1">The accessory proteins ExbB and ExbD seem to form a complex with TonB.</text>
</comment>
<comment type="subcellular location">
    <subcellularLocation>
        <location>Cell inner membrane</location>
        <topology>Multi-pass membrane protein</topology>
    </subcellularLocation>
</comment>
<comment type="similarity">
    <text evidence="3">Belongs to the ExbB/TolQ family.</text>
</comment>
<keyword id="KW-0997">Cell inner membrane</keyword>
<keyword id="KW-1003">Cell membrane</keyword>
<keyword id="KW-0472">Membrane</keyword>
<keyword id="KW-0653">Protein transport</keyword>
<keyword id="KW-0812">Transmembrane</keyword>
<keyword id="KW-1133">Transmembrane helix</keyword>
<keyword id="KW-0813">Transport</keyword>
<name>EXBB_NEIMA</name>
<feature type="chain" id="PRO_0000145806" description="Biopolymer transport protein ExbB">
    <location>
        <begin position="1"/>
        <end position="220"/>
    </location>
</feature>
<feature type="transmembrane region" description="Helical" evidence="2">
    <location>
        <begin position="13"/>
        <end position="33"/>
    </location>
</feature>
<feature type="transmembrane region" description="Helical" evidence="2">
    <location>
        <begin position="126"/>
        <end position="146"/>
    </location>
</feature>
<feature type="transmembrane region" description="Helical" evidence="2">
    <location>
        <begin position="168"/>
        <end position="188"/>
    </location>
</feature>